<protein>
    <recommendedName>
        <fullName evidence="1">tRNA/tmRNA (uracil-C(5))-methyltransferase</fullName>
        <ecNumber evidence="1">2.1.1.-</ecNumber>
        <ecNumber evidence="1">2.1.1.35</ecNumber>
    </recommendedName>
    <alternativeName>
        <fullName evidence="1">tRNA (uracil(54)-C(5))-methyltransferase</fullName>
    </alternativeName>
    <alternativeName>
        <fullName evidence="1">tRNA(m5U54)-methyltransferase</fullName>
        <shortName evidence="1">RUMT</shortName>
    </alternativeName>
    <alternativeName>
        <fullName evidence="1">tmRNA (uracil(341)-C(5))-methyltransferase</fullName>
    </alternativeName>
</protein>
<comment type="function">
    <text evidence="1">Dual-specificity methyltransferase that catalyzes the formation of 5-methyluridine at position 54 (m5U54) in all tRNAs, and that of position 341 (m5U341) in tmRNA (transfer-mRNA).</text>
</comment>
<comment type="catalytic activity">
    <reaction evidence="1">
        <text>uridine(54) in tRNA + S-adenosyl-L-methionine = 5-methyluridine(54) in tRNA + S-adenosyl-L-homocysteine + H(+)</text>
        <dbReference type="Rhea" id="RHEA:42712"/>
        <dbReference type="Rhea" id="RHEA-COMP:10167"/>
        <dbReference type="Rhea" id="RHEA-COMP:10193"/>
        <dbReference type="ChEBI" id="CHEBI:15378"/>
        <dbReference type="ChEBI" id="CHEBI:57856"/>
        <dbReference type="ChEBI" id="CHEBI:59789"/>
        <dbReference type="ChEBI" id="CHEBI:65315"/>
        <dbReference type="ChEBI" id="CHEBI:74447"/>
        <dbReference type="EC" id="2.1.1.35"/>
    </reaction>
</comment>
<comment type="catalytic activity">
    <reaction evidence="1">
        <text>uridine(341) in tmRNA + S-adenosyl-L-methionine = 5-methyluridine(341) in tmRNA + S-adenosyl-L-homocysteine + H(+)</text>
        <dbReference type="Rhea" id="RHEA:43612"/>
        <dbReference type="Rhea" id="RHEA-COMP:10630"/>
        <dbReference type="Rhea" id="RHEA-COMP:10631"/>
        <dbReference type="ChEBI" id="CHEBI:15378"/>
        <dbReference type="ChEBI" id="CHEBI:57856"/>
        <dbReference type="ChEBI" id="CHEBI:59789"/>
        <dbReference type="ChEBI" id="CHEBI:65315"/>
        <dbReference type="ChEBI" id="CHEBI:74447"/>
    </reaction>
</comment>
<comment type="similarity">
    <text evidence="1">Belongs to the class I-like SAM-binding methyltransferase superfamily. RNA M5U methyltransferase family. TrmA subfamily.</text>
</comment>
<proteinExistence type="inferred from homology"/>
<gene>
    <name evidence="1" type="primary">trmA</name>
    <name type="ordered locus">EcSMS35_4412</name>
</gene>
<reference key="1">
    <citation type="journal article" date="2008" name="J. Bacteriol.">
        <title>Insights into the environmental resistance gene pool from the genome sequence of the multidrug-resistant environmental isolate Escherichia coli SMS-3-5.</title>
        <authorList>
            <person name="Fricke W.F."/>
            <person name="Wright M.S."/>
            <person name="Lindell A.H."/>
            <person name="Harkins D.M."/>
            <person name="Baker-Austin C."/>
            <person name="Ravel J."/>
            <person name="Stepanauskas R."/>
        </authorList>
    </citation>
    <scope>NUCLEOTIDE SEQUENCE [LARGE SCALE GENOMIC DNA]</scope>
    <source>
        <strain>SMS-3-5 / SECEC</strain>
    </source>
</reference>
<keyword id="KW-0489">Methyltransferase</keyword>
<keyword id="KW-0949">S-adenosyl-L-methionine</keyword>
<keyword id="KW-0808">Transferase</keyword>
<keyword id="KW-0819">tRNA processing</keyword>
<organism>
    <name type="scientific">Escherichia coli (strain SMS-3-5 / SECEC)</name>
    <dbReference type="NCBI Taxonomy" id="439855"/>
    <lineage>
        <taxon>Bacteria</taxon>
        <taxon>Pseudomonadati</taxon>
        <taxon>Pseudomonadota</taxon>
        <taxon>Gammaproteobacteria</taxon>
        <taxon>Enterobacterales</taxon>
        <taxon>Enterobacteriaceae</taxon>
        <taxon>Escherichia</taxon>
    </lineage>
</organism>
<name>TRMA_ECOSM</name>
<accession>B1LNS5</accession>
<dbReference type="EC" id="2.1.1.-" evidence="1"/>
<dbReference type="EC" id="2.1.1.35" evidence="1"/>
<dbReference type="EMBL" id="CP000970">
    <property type="protein sequence ID" value="ACB17882.1"/>
    <property type="molecule type" value="Genomic_DNA"/>
</dbReference>
<dbReference type="RefSeq" id="WP_000187018.1">
    <property type="nucleotide sequence ID" value="NC_010498.1"/>
</dbReference>
<dbReference type="SMR" id="B1LNS5"/>
<dbReference type="KEGG" id="ecm:EcSMS35_4412"/>
<dbReference type="HOGENOM" id="CLU_043022_0_0_6"/>
<dbReference type="Proteomes" id="UP000007011">
    <property type="component" value="Chromosome"/>
</dbReference>
<dbReference type="GO" id="GO:0005829">
    <property type="term" value="C:cytosol"/>
    <property type="evidence" value="ECO:0007669"/>
    <property type="project" value="TreeGrafter"/>
</dbReference>
<dbReference type="GO" id="GO:0019843">
    <property type="term" value="F:rRNA binding"/>
    <property type="evidence" value="ECO:0007669"/>
    <property type="project" value="TreeGrafter"/>
</dbReference>
<dbReference type="GO" id="GO:0030697">
    <property type="term" value="F:tRNA (uracil(54)-C5)-methyltransferase activity, S-adenosyl methionine-dependent"/>
    <property type="evidence" value="ECO:0007669"/>
    <property type="project" value="UniProtKB-UniRule"/>
</dbReference>
<dbReference type="GO" id="GO:0000049">
    <property type="term" value="F:tRNA binding"/>
    <property type="evidence" value="ECO:0007669"/>
    <property type="project" value="TreeGrafter"/>
</dbReference>
<dbReference type="GO" id="GO:0030488">
    <property type="term" value="P:tRNA methylation"/>
    <property type="evidence" value="ECO:0007669"/>
    <property type="project" value="UniProtKB-UniRule"/>
</dbReference>
<dbReference type="CDD" id="cd02440">
    <property type="entry name" value="AdoMet_MTases"/>
    <property type="match status" value="1"/>
</dbReference>
<dbReference type="FunFam" id="2.40.50.1070:FF:000001">
    <property type="entry name" value="tRNA/tmRNA (uracil-C(5))-methyltransferase"/>
    <property type="match status" value="1"/>
</dbReference>
<dbReference type="FunFam" id="3.40.50.150:FF:000012">
    <property type="entry name" value="tRNA/tmRNA (uracil-C(5))-methyltransferase"/>
    <property type="match status" value="1"/>
</dbReference>
<dbReference type="Gene3D" id="2.40.50.1070">
    <property type="match status" value="1"/>
</dbReference>
<dbReference type="Gene3D" id="3.40.50.150">
    <property type="entry name" value="Vaccinia Virus protein VP39"/>
    <property type="match status" value="1"/>
</dbReference>
<dbReference type="HAMAP" id="MF_01011">
    <property type="entry name" value="RNA_methyltr_TrmA"/>
    <property type="match status" value="1"/>
</dbReference>
<dbReference type="InterPro" id="IPR030390">
    <property type="entry name" value="MeTrfase_TrmA_AS"/>
</dbReference>
<dbReference type="InterPro" id="IPR030391">
    <property type="entry name" value="MeTrfase_TrmA_CS"/>
</dbReference>
<dbReference type="InterPro" id="IPR029063">
    <property type="entry name" value="SAM-dependent_MTases_sf"/>
</dbReference>
<dbReference type="InterPro" id="IPR011869">
    <property type="entry name" value="TrmA_MeTrfase"/>
</dbReference>
<dbReference type="InterPro" id="IPR010280">
    <property type="entry name" value="U5_MeTrfase_fam"/>
</dbReference>
<dbReference type="NCBIfam" id="TIGR02143">
    <property type="entry name" value="trmA_only"/>
    <property type="match status" value="1"/>
</dbReference>
<dbReference type="PANTHER" id="PTHR47790">
    <property type="entry name" value="TRNA/TMRNA (URACIL-C(5))-METHYLTRANSFERASE"/>
    <property type="match status" value="1"/>
</dbReference>
<dbReference type="PANTHER" id="PTHR47790:SF2">
    <property type="entry name" value="TRNA_TMRNA (URACIL-C(5))-METHYLTRANSFERASE"/>
    <property type="match status" value="1"/>
</dbReference>
<dbReference type="Pfam" id="PF05958">
    <property type="entry name" value="tRNA_U5-meth_tr"/>
    <property type="match status" value="1"/>
</dbReference>
<dbReference type="SUPFAM" id="SSF53335">
    <property type="entry name" value="S-adenosyl-L-methionine-dependent methyltransferases"/>
    <property type="match status" value="1"/>
</dbReference>
<dbReference type="PROSITE" id="PS51687">
    <property type="entry name" value="SAM_MT_RNA_M5U"/>
    <property type="match status" value="1"/>
</dbReference>
<dbReference type="PROSITE" id="PS01230">
    <property type="entry name" value="TRMA_1"/>
    <property type="match status" value="1"/>
</dbReference>
<dbReference type="PROSITE" id="PS01231">
    <property type="entry name" value="TRMA_2"/>
    <property type="match status" value="1"/>
</dbReference>
<sequence length="366" mass="41937">MTPEHLPTEQYEAQLAEKVVRLQSMMAPFSDLVPEVFRSPVSHYRMRAEFRIWHDGDDLYHIIFDQQTKSRIRVDSFPAASELINQLMTAMIAGVRNNPVLRHKLFQIDYLTTLSNQAVVSLLYHKKLDDEWRQEAEALRDALRAQNLNVHLIGRATKTKIELDQDYIDERLPVAGKEMIYRQVENSFTQPNAAMNIQMLEWALDVTKGSKGDLLELYCGNGNFSLALARNFDRVLATEIAKPSVAAAQYNIAANHIDNVQIIRMAAEEFTQAMNGVREFNRLQGIDLKSYQCETIFVDPPRSGLDGETEKMVQAYPRILYISCNPETLCKNLETLSQTHKVERLALFDQFPYTHHMECGVLLTAK</sequence>
<feature type="chain" id="PRO_1000198540" description="tRNA/tmRNA (uracil-C(5))-methyltransferase">
    <location>
        <begin position="1"/>
        <end position="366"/>
    </location>
</feature>
<feature type="active site" description="Nucleophile" evidence="1">
    <location>
        <position position="324"/>
    </location>
</feature>
<feature type="active site" description="Proton acceptor" evidence="1">
    <location>
        <position position="358"/>
    </location>
</feature>
<feature type="binding site" evidence="1">
    <location>
        <position position="190"/>
    </location>
    <ligand>
        <name>S-adenosyl-L-methionine</name>
        <dbReference type="ChEBI" id="CHEBI:59789"/>
    </ligand>
</feature>
<feature type="binding site" evidence="1">
    <location>
        <position position="218"/>
    </location>
    <ligand>
        <name>S-adenosyl-L-methionine</name>
        <dbReference type="ChEBI" id="CHEBI:59789"/>
    </ligand>
</feature>
<feature type="binding site" evidence="1">
    <location>
        <position position="223"/>
    </location>
    <ligand>
        <name>S-adenosyl-L-methionine</name>
        <dbReference type="ChEBI" id="CHEBI:59789"/>
    </ligand>
</feature>
<feature type="binding site" evidence="1">
    <location>
        <position position="239"/>
    </location>
    <ligand>
        <name>S-adenosyl-L-methionine</name>
        <dbReference type="ChEBI" id="CHEBI:59789"/>
    </ligand>
</feature>
<feature type="binding site" evidence="1">
    <location>
        <position position="299"/>
    </location>
    <ligand>
        <name>S-adenosyl-L-methionine</name>
        <dbReference type="ChEBI" id="CHEBI:59789"/>
    </ligand>
</feature>
<evidence type="ECO:0000255" key="1">
    <source>
        <dbReference type="HAMAP-Rule" id="MF_01011"/>
    </source>
</evidence>